<proteinExistence type="evidence at protein level"/>
<keyword id="KW-0002">3D-structure</keyword>
<keyword id="KW-0025">Alternative splicing</keyword>
<keyword id="KW-0446">Lipid-binding</keyword>
<keyword id="KW-0597">Phosphoprotein</keyword>
<keyword id="KW-1267">Proteomics identification</keyword>
<keyword id="KW-1185">Reference proteome</keyword>
<gene>
    <name type="primary">ACBD4</name>
    <name type="ORF">HMFT0700</name>
</gene>
<feature type="chain" id="PRO_0000214032" description="Acyl-CoA-binding domain-containing protein 4">
    <location>
        <begin position="1"/>
        <end position="268"/>
    </location>
</feature>
<feature type="domain" description="ACB" evidence="1">
    <location>
        <begin position="12"/>
        <end position="101"/>
    </location>
</feature>
<feature type="region of interest" description="Disordered" evidence="2">
    <location>
        <begin position="151"/>
        <end position="175"/>
    </location>
</feature>
<feature type="compositionally biased region" description="Pro residues" evidence="2">
    <location>
        <begin position="156"/>
        <end position="167"/>
    </location>
</feature>
<feature type="binding site">
    <location>
        <begin position="23"/>
        <end position="32"/>
    </location>
    <ligand>
        <name>an acyl-CoA</name>
        <dbReference type="ChEBI" id="CHEBI:58342"/>
    </ligand>
</feature>
<feature type="binding site">
    <location>
        <begin position="43"/>
        <end position="47"/>
    </location>
    <ligand>
        <name>an acyl-CoA</name>
        <dbReference type="ChEBI" id="CHEBI:58342"/>
    </ligand>
</feature>
<feature type="binding site">
    <location>
        <position position="69"/>
    </location>
    <ligand>
        <name>an acyl-CoA</name>
        <dbReference type="ChEBI" id="CHEBI:58342"/>
    </ligand>
</feature>
<feature type="binding site">
    <location>
        <position position="88"/>
    </location>
    <ligand>
        <name>an acyl-CoA</name>
        <dbReference type="ChEBI" id="CHEBI:58342"/>
    </ligand>
</feature>
<feature type="modified residue" description="Phosphoserine" evidence="7">
    <location>
        <position position="166"/>
    </location>
</feature>
<feature type="modified residue" description="Phosphoserine" evidence="7">
    <location>
        <position position="171"/>
    </location>
</feature>
<feature type="splice variant" id="VSP_014088" description="In isoform 3." evidence="4 5">
    <original>ESHSPRDLDSEVFCDSLEQLEPEL</original>
    <variation>ASLWAVTLPTPPQSPIHPGTWTPRFSVIPWSSWSLSWFGQ</variation>
    <location>
        <begin position="168"/>
        <end position="191"/>
    </location>
</feature>
<feature type="splice variant" id="VSP_014089" description="In isoform 2." evidence="3 5">
    <original>SSGQHLEESVIPGTAPCPPQRKRGCGAARRGPRSWTCGCWGQFEHYRRACRRCRRGCRAWRACPGPLSSLTLSVRLE</original>
    <variation>VWTEQRAASGGKRDPRNSPVPPTKKEGLRGSPPGPQELDVWLLGTVRALQESMQEVQARVQSLESMPRPPEQRPQPRPSARPWPLGLPGPALLFFLLWPFVVQWLFRMFRTQKR</variation>
    <location>
        <begin position="192"/>
        <end position="268"/>
    </location>
</feature>
<feature type="splice variant" id="VSP_014090" description="In isoform 3." evidence="4 5">
    <original>SLTLSVRLE</original>
    <variation>RGRSPGPVLGHGPLGSRGPRCSSSSCGPSSSSGSSECFGPKRGDCQWRGLCSQLRLSCCALSLPRV</variation>
    <location>
        <begin position="260"/>
        <end position="268"/>
    </location>
</feature>
<feature type="sequence variant" id="VAR_055478" description="In dbSNP:rs901754.">
    <original>P</original>
    <variation>L</variation>
    <location>
        <position position="118"/>
    </location>
</feature>
<feature type="sequence variant" id="VAR_059109" description="In dbSNP:rs16939879.">
    <original>R</original>
    <variation>G</variation>
    <location>
        <position position="242"/>
    </location>
</feature>
<feature type="sequence conflict" description="In Ref. 2; BAC11403." evidence="6" ref="2">
    <original>S</original>
    <variation>G</variation>
    <location>
        <position position="166"/>
    </location>
</feature>
<feature type="helix" evidence="8">
    <location>
        <begin position="14"/>
        <end position="25"/>
    </location>
</feature>
<feature type="helix" evidence="8">
    <location>
        <begin position="36"/>
        <end position="51"/>
    </location>
</feature>
<feature type="helix" evidence="8">
    <location>
        <begin position="64"/>
        <end position="74"/>
    </location>
</feature>
<feature type="turn" evidence="8">
    <location>
        <begin position="75"/>
        <end position="78"/>
    </location>
</feature>
<feature type="helix" evidence="8">
    <location>
        <begin position="81"/>
        <end position="100"/>
    </location>
</feature>
<sequence length="268" mass="30308">MGTEKESPEPDCQKQFQAAVSVIQNLPKNGSYRPSYEEMLRFYSYYKQATMGPCLVPRPGFWDPIGRYKWDAWNSLGKMSREEAMSAYITEMKLVAQKVIDTVPLGEVAEDMFGYFEPLYQVIPDMPRPPETFLRRVTGWKEQVVNGDVGAVSEPPCLPKEPAPPSPESHSPRDLDSEVFCDSLEQLEPELSSGQHLEESVIPGTAPCPPQRKRGCGAARRGPRSWTCGCWGQFEHYRRACRRCRRGCRAWRACPGPLSSLTLSVRLE</sequence>
<protein>
    <recommendedName>
        <fullName>Acyl-CoA-binding domain-containing protein 4</fullName>
    </recommendedName>
</protein>
<name>ACBD4_HUMAN</name>
<comment type="function">
    <text>Binds medium- and long-chain acyl-CoA esters and may function as an intracellular carrier of acyl-CoA esters.</text>
</comment>
<comment type="interaction">
    <interactant intactId="EBI-12811089">
        <id>Q8NC06-3</id>
    </interactant>
    <interactant intactId="EBI-11954292">
        <id>Q86V38</id>
        <label>ATN1</label>
    </interactant>
    <organismsDiffer>false</organismsDiffer>
    <experiments>3</experiments>
</comment>
<comment type="interaction">
    <interactant intactId="EBI-12811089">
        <id>Q8NC06-3</id>
    </interactant>
    <interactant intactId="EBI-6875961">
        <id>P02489</id>
        <label>CRYAA</label>
    </interactant>
    <organismsDiffer>false</organismsDiffer>
    <experiments>3</experiments>
</comment>
<comment type="interaction">
    <interactant intactId="EBI-12811089">
        <id>Q8NC06-3</id>
    </interactant>
    <interactant intactId="EBI-10976677">
        <id>G5E9A7</id>
        <label>DMWD</label>
    </interactant>
    <organismsDiffer>false</organismsDiffer>
    <experiments>3</experiments>
</comment>
<comment type="interaction">
    <interactant intactId="EBI-12811089">
        <id>Q8NC06-3</id>
    </interactant>
    <interactant intactId="EBI-348399">
        <id>P22607</id>
        <label>FGFR3</label>
    </interactant>
    <organismsDiffer>false</organismsDiffer>
    <experiments>3</experiments>
</comment>
<comment type="interaction">
    <interactant intactId="EBI-12811089">
        <id>Q8NC06-3</id>
    </interactant>
    <interactant intactId="EBI-25913156">
        <id>O14908-2</id>
        <label>GIPC1</label>
    </interactant>
    <organismsDiffer>false</organismsDiffer>
    <experiments>3</experiments>
</comment>
<comment type="interaction">
    <interactant intactId="EBI-12811089">
        <id>Q8NC06-3</id>
    </interactant>
    <interactant intactId="EBI-351506">
        <id>P06396</id>
        <label>GSN</label>
    </interactant>
    <organismsDiffer>false</organismsDiffer>
    <experiments>3</experiments>
</comment>
<comment type="interaction">
    <interactant intactId="EBI-12811089">
        <id>Q8NC06-3</id>
    </interactant>
    <interactant intactId="EBI-2432309">
        <id>Q92876</id>
        <label>KLK6</label>
    </interactant>
    <organismsDiffer>false</organismsDiffer>
    <experiments>3</experiments>
</comment>
<comment type="interaction">
    <interactant intactId="EBI-12811089">
        <id>Q8NC06-3</id>
    </interactant>
    <interactant intactId="EBI-5235340">
        <id>Q7Z699</id>
        <label>SPRED1</label>
    </interactant>
    <organismsDiffer>false</organismsDiffer>
    <experiments>3</experiments>
</comment>
<comment type="interaction">
    <interactant intactId="EBI-12811089">
        <id>Q8NC06-3</id>
    </interactant>
    <interactant intactId="EBI-750487">
        <id>Q8WW24</id>
        <label>TEKT4</label>
    </interactant>
    <organismsDiffer>false</organismsDiffer>
    <experiments>3</experiments>
</comment>
<comment type="alternative products">
    <event type="alternative splicing"/>
    <isoform>
        <id>Q8NC06-1</id>
        <name>1</name>
        <sequence type="displayed"/>
    </isoform>
    <isoform>
        <id>Q8NC06-2</id>
        <name>2</name>
        <sequence type="described" ref="VSP_014089"/>
    </isoform>
    <isoform>
        <id>Q8NC06-3</id>
        <name>3</name>
        <sequence type="described" ref="VSP_014088 VSP_014090"/>
    </isoform>
</comment>
<evidence type="ECO:0000255" key="1">
    <source>
        <dbReference type="PROSITE-ProRule" id="PRU00573"/>
    </source>
</evidence>
<evidence type="ECO:0000256" key="2">
    <source>
        <dbReference type="SAM" id="MobiDB-lite"/>
    </source>
</evidence>
<evidence type="ECO:0000303" key="3">
    <source>
    </source>
</evidence>
<evidence type="ECO:0000303" key="4">
    <source>
    </source>
</evidence>
<evidence type="ECO:0000303" key="5">
    <source>
    </source>
</evidence>
<evidence type="ECO:0000305" key="6"/>
<evidence type="ECO:0007744" key="7">
    <source>
    </source>
</evidence>
<evidence type="ECO:0007829" key="8">
    <source>
        <dbReference type="PDB" id="2WH5"/>
    </source>
</evidence>
<reference key="1">
    <citation type="journal article" date="2004" name="Oncogene">
        <title>Expression profiling and differential screening between hepatoblastomas and the corresponding normal livers: identification of high expression of the PLK1 oncogene as a poor-prognostic indicator of hepatoblastomas.</title>
        <authorList>
            <person name="Yamada S."/>
            <person name="Ohira M."/>
            <person name="Horie H."/>
            <person name="Ando K."/>
            <person name="Takayasu H."/>
            <person name="Suzuki Y."/>
            <person name="Sugano S."/>
            <person name="Hirata T."/>
            <person name="Goto T."/>
            <person name="Matsunaga T."/>
            <person name="Hiyama E."/>
            <person name="Hayashi Y."/>
            <person name="Ando H."/>
            <person name="Suita S."/>
            <person name="Kaneko M."/>
            <person name="Sasaki F."/>
            <person name="Hashizume K."/>
            <person name="Ohnuma N."/>
            <person name="Nakagawara A."/>
        </authorList>
    </citation>
    <scope>NUCLEOTIDE SEQUENCE [LARGE SCALE MRNA] (ISOFORM 3)</scope>
    <source>
        <tissue>Hepatoblastoma</tissue>
    </source>
</reference>
<reference key="2">
    <citation type="journal article" date="2004" name="Nat. Genet.">
        <title>Complete sequencing and characterization of 21,243 full-length human cDNAs.</title>
        <authorList>
            <person name="Ota T."/>
            <person name="Suzuki Y."/>
            <person name="Nishikawa T."/>
            <person name="Otsuki T."/>
            <person name="Sugiyama T."/>
            <person name="Irie R."/>
            <person name="Wakamatsu A."/>
            <person name="Hayashi K."/>
            <person name="Sato H."/>
            <person name="Nagai K."/>
            <person name="Kimura K."/>
            <person name="Makita H."/>
            <person name="Sekine M."/>
            <person name="Obayashi M."/>
            <person name="Nishi T."/>
            <person name="Shibahara T."/>
            <person name="Tanaka T."/>
            <person name="Ishii S."/>
            <person name="Yamamoto J."/>
            <person name="Saito K."/>
            <person name="Kawai Y."/>
            <person name="Isono Y."/>
            <person name="Nakamura Y."/>
            <person name="Nagahari K."/>
            <person name="Murakami K."/>
            <person name="Yasuda T."/>
            <person name="Iwayanagi T."/>
            <person name="Wagatsuma M."/>
            <person name="Shiratori A."/>
            <person name="Sudo H."/>
            <person name="Hosoiri T."/>
            <person name="Kaku Y."/>
            <person name="Kodaira H."/>
            <person name="Kondo H."/>
            <person name="Sugawara M."/>
            <person name="Takahashi M."/>
            <person name="Kanda K."/>
            <person name="Yokoi T."/>
            <person name="Furuya T."/>
            <person name="Kikkawa E."/>
            <person name="Omura Y."/>
            <person name="Abe K."/>
            <person name="Kamihara K."/>
            <person name="Katsuta N."/>
            <person name="Sato K."/>
            <person name="Tanikawa M."/>
            <person name="Yamazaki M."/>
            <person name="Ninomiya K."/>
            <person name="Ishibashi T."/>
            <person name="Yamashita H."/>
            <person name="Murakawa K."/>
            <person name="Fujimori K."/>
            <person name="Tanai H."/>
            <person name="Kimata M."/>
            <person name="Watanabe M."/>
            <person name="Hiraoka S."/>
            <person name="Chiba Y."/>
            <person name="Ishida S."/>
            <person name="Ono Y."/>
            <person name="Takiguchi S."/>
            <person name="Watanabe S."/>
            <person name="Yosida M."/>
            <person name="Hotuta T."/>
            <person name="Kusano J."/>
            <person name="Kanehori K."/>
            <person name="Takahashi-Fujii A."/>
            <person name="Hara H."/>
            <person name="Tanase T.-O."/>
            <person name="Nomura Y."/>
            <person name="Togiya S."/>
            <person name="Komai F."/>
            <person name="Hara R."/>
            <person name="Takeuchi K."/>
            <person name="Arita M."/>
            <person name="Imose N."/>
            <person name="Musashino K."/>
            <person name="Yuuki H."/>
            <person name="Oshima A."/>
            <person name="Sasaki N."/>
            <person name="Aotsuka S."/>
            <person name="Yoshikawa Y."/>
            <person name="Matsunawa H."/>
            <person name="Ichihara T."/>
            <person name="Shiohata N."/>
            <person name="Sano S."/>
            <person name="Moriya S."/>
            <person name="Momiyama H."/>
            <person name="Satoh N."/>
            <person name="Takami S."/>
            <person name="Terashima Y."/>
            <person name="Suzuki O."/>
            <person name="Nakagawa S."/>
            <person name="Senoh A."/>
            <person name="Mizoguchi H."/>
            <person name="Goto Y."/>
            <person name="Shimizu F."/>
            <person name="Wakebe H."/>
            <person name="Hishigaki H."/>
            <person name="Watanabe T."/>
            <person name="Sugiyama A."/>
            <person name="Takemoto M."/>
            <person name="Kawakami B."/>
            <person name="Yamazaki M."/>
            <person name="Watanabe K."/>
            <person name="Kumagai A."/>
            <person name="Itakura S."/>
            <person name="Fukuzumi Y."/>
            <person name="Fujimori Y."/>
            <person name="Komiyama M."/>
            <person name="Tashiro H."/>
            <person name="Tanigami A."/>
            <person name="Fujiwara T."/>
            <person name="Ono T."/>
            <person name="Yamada K."/>
            <person name="Fujii Y."/>
            <person name="Ozaki K."/>
            <person name="Hirao M."/>
            <person name="Ohmori Y."/>
            <person name="Kawabata A."/>
            <person name="Hikiji T."/>
            <person name="Kobatake N."/>
            <person name="Inagaki H."/>
            <person name="Ikema Y."/>
            <person name="Okamoto S."/>
            <person name="Okitani R."/>
            <person name="Kawakami T."/>
            <person name="Noguchi S."/>
            <person name="Itoh T."/>
            <person name="Shigeta K."/>
            <person name="Senba T."/>
            <person name="Matsumura K."/>
            <person name="Nakajima Y."/>
            <person name="Mizuno T."/>
            <person name="Morinaga M."/>
            <person name="Sasaki M."/>
            <person name="Togashi T."/>
            <person name="Oyama M."/>
            <person name="Hata H."/>
            <person name="Watanabe M."/>
            <person name="Komatsu T."/>
            <person name="Mizushima-Sugano J."/>
            <person name="Satoh T."/>
            <person name="Shirai Y."/>
            <person name="Takahashi Y."/>
            <person name="Nakagawa K."/>
            <person name="Okumura K."/>
            <person name="Nagase T."/>
            <person name="Nomura N."/>
            <person name="Kikuchi H."/>
            <person name="Masuho Y."/>
            <person name="Yamashita R."/>
            <person name="Nakai K."/>
            <person name="Yada T."/>
            <person name="Nakamura Y."/>
            <person name="Ohara O."/>
            <person name="Isogai T."/>
            <person name="Sugano S."/>
        </authorList>
    </citation>
    <scope>NUCLEOTIDE SEQUENCE [LARGE SCALE MRNA] (ISOFORMS 1 AND 2)</scope>
    <source>
        <tissue>Ovary</tissue>
        <tissue>Placenta</tissue>
    </source>
</reference>
<reference key="3">
    <citation type="submission" date="2005-09" db="EMBL/GenBank/DDBJ databases">
        <authorList>
            <person name="Mural R.J."/>
            <person name="Istrail S."/>
            <person name="Sutton G.G."/>
            <person name="Florea L."/>
            <person name="Halpern A.L."/>
            <person name="Mobarry C.M."/>
            <person name="Lippert R."/>
            <person name="Walenz B."/>
            <person name="Shatkay H."/>
            <person name="Dew I."/>
            <person name="Miller J.R."/>
            <person name="Flanigan M.J."/>
            <person name="Edwards N.J."/>
            <person name="Bolanos R."/>
            <person name="Fasulo D."/>
            <person name="Halldorsson B.V."/>
            <person name="Hannenhalli S."/>
            <person name="Turner R."/>
            <person name="Yooseph S."/>
            <person name="Lu F."/>
            <person name="Nusskern D.R."/>
            <person name="Shue B.C."/>
            <person name="Zheng X.H."/>
            <person name="Zhong F."/>
            <person name="Delcher A.L."/>
            <person name="Huson D.H."/>
            <person name="Kravitz S.A."/>
            <person name="Mouchard L."/>
            <person name="Reinert K."/>
            <person name="Remington K.A."/>
            <person name="Clark A.G."/>
            <person name="Waterman M.S."/>
            <person name="Eichler E.E."/>
            <person name="Adams M.D."/>
            <person name="Hunkapiller M.W."/>
            <person name="Myers E.W."/>
            <person name="Venter J.C."/>
        </authorList>
    </citation>
    <scope>NUCLEOTIDE SEQUENCE [LARGE SCALE GENOMIC DNA]</scope>
</reference>
<reference key="4">
    <citation type="journal article" date="2004" name="Genome Res.">
        <title>The status, quality, and expansion of the NIH full-length cDNA project: the Mammalian Gene Collection (MGC).</title>
        <authorList>
            <consortium name="The MGC Project Team"/>
        </authorList>
    </citation>
    <scope>NUCLEOTIDE SEQUENCE [LARGE SCALE MRNA] (ISOFORMS 2 AND 3)</scope>
    <source>
        <tissue>Brain</tissue>
        <tissue>Colon</tissue>
    </source>
</reference>
<reference key="5">
    <citation type="journal article" date="2014" name="J. Proteomics">
        <title>An enzyme assisted RP-RPLC approach for in-depth analysis of human liver phosphoproteome.</title>
        <authorList>
            <person name="Bian Y."/>
            <person name="Song C."/>
            <person name="Cheng K."/>
            <person name="Dong M."/>
            <person name="Wang F."/>
            <person name="Huang J."/>
            <person name="Sun D."/>
            <person name="Wang L."/>
            <person name="Ye M."/>
            <person name="Zou H."/>
        </authorList>
    </citation>
    <scope>PHOSPHORYLATION [LARGE SCALE ANALYSIS] AT SER-166 AND SER-171</scope>
    <scope>IDENTIFICATION BY MASS SPECTROMETRY [LARGE SCALE ANALYSIS]</scope>
    <source>
        <tissue>Liver</tissue>
    </source>
</reference>
<reference key="6">
    <citation type="submission" date="2009-04" db="PDB data bank">
        <title>Crystal structure of human acyl-CoA binding domain 4.</title>
        <authorList>
            <consortium name="Structural genomics consortium (SGC)"/>
        </authorList>
    </citation>
    <scope>X-RAY CRYSTALLOGRAPHY (2.60 ANGSTROMS) OF 7-110 IN COMPLEX WITH THE ACYL-COA STEAROYL-COENZYME A</scope>
</reference>
<dbReference type="EMBL" id="AB073387">
    <property type="protein sequence ID" value="BAD38638.1"/>
    <property type="molecule type" value="mRNA"/>
</dbReference>
<dbReference type="EMBL" id="AK023384">
    <property type="protein sequence ID" value="BAB14553.1"/>
    <property type="molecule type" value="mRNA"/>
</dbReference>
<dbReference type="EMBL" id="AK075104">
    <property type="protein sequence ID" value="BAC11403.1"/>
    <property type="molecule type" value="mRNA"/>
</dbReference>
<dbReference type="EMBL" id="CH471178">
    <property type="protein sequence ID" value="EAW51550.1"/>
    <property type="molecule type" value="Genomic_DNA"/>
</dbReference>
<dbReference type="EMBL" id="CH471178">
    <property type="protein sequence ID" value="EAW51551.1"/>
    <property type="molecule type" value="Genomic_DNA"/>
</dbReference>
<dbReference type="EMBL" id="CH471178">
    <property type="protein sequence ID" value="EAW51552.1"/>
    <property type="molecule type" value="Genomic_DNA"/>
</dbReference>
<dbReference type="EMBL" id="BC029164">
    <property type="protein sequence ID" value="AAH29164.1"/>
    <property type="molecule type" value="mRNA"/>
</dbReference>
<dbReference type="EMBL" id="BC041143">
    <property type="protein sequence ID" value="AAH41143.1"/>
    <property type="molecule type" value="mRNA"/>
</dbReference>
<dbReference type="CCDS" id="CCDS42348.1">
    <molecule id="Q8NC06-2"/>
</dbReference>
<dbReference type="CCDS" id="CCDS45710.1">
    <molecule id="Q8NC06-3"/>
</dbReference>
<dbReference type="CCDS" id="CCDS45711.1">
    <molecule id="Q8NC06-1"/>
</dbReference>
<dbReference type="RefSeq" id="NP_001129177.1">
    <molecule id="Q8NC06-2"/>
    <property type="nucleotide sequence ID" value="NM_001135705.3"/>
</dbReference>
<dbReference type="RefSeq" id="NP_001129178.1">
    <molecule id="Q8NC06-3"/>
    <property type="nucleotide sequence ID" value="NM_001135706.3"/>
</dbReference>
<dbReference type="RefSeq" id="NP_001129179.1">
    <molecule id="Q8NC06-1"/>
    <property type="nucleotide sequence ID" value="NM_001135707.3"/>
</dbReference>
<dbReference type="RefSeq" id="NP_001308281.1">
    <molecule id="Q8NC06-3"/>
    <property type="nucleotide sequence ID" value="NM_001321352.2"/>
</dbReference>
<dbReference type="RefSeq" id="NP_001308282.1">
    <molecule id="Q8NC06-3"/>
    <property type="nucleotide sequence ID" value="NM_001321353.2"/>
</dbReference>
<dbReference type="RefSeq" id="NP_078998.1">
    <molecule id="Q8NC06-2"/>
    <property type="nucleotide sequence ID" value="NM_024722.4"/>
</dbReference>
<dbReference type="RefSeq" id="XP_016880577.1">
    <molecule id="Q8NC06-3"/>
    <property type="nucleotide sequence ID" value="XM_017025088.2"/>
</dbReference>
<dbReference type="RefSeq" id="XP_016880580.1">
    <property type="nucleotide sequence ID" value="XM_017025091.1"/>
</dbReference>
<dbReference type="RefSeq" id="XP_016880581.1">
    <molecule id="Q8NC06-2"/>
    <property type="nucleotide sequence ID" value="XM_017025092.3"/>
</dbReference>
<dbReference type="RefSeq" id="XP_047292719.1">
    <molecule id="Q8NC06-2"/>
    <property type="nucleotide sequence ID" value="XM_047436763.1"/>
</dbReference>
<dbReference type="RefSeq" id="XP_047292720.1">
    <molecule id="Q8NC06-2"/>
    <property type="nucleotide sequence ID" value="XM_047436764.1"/>
</dbReference>
<dbReference type="RefSeq" id="XP_047292721.1">
    <molecule id="Q8NC06-2"/>
    <property type="nucleotide sequence ID" value="XM_047436765.1"/>
</dbReference>
<dbReference type="RefSeq" id="XP_054173210.1">
    <molecule id="Q8NC06-3"/>
    <property type="nucleotide sequence ID" value="XM_054317235.1"/>
</dbReference>
<dbReference type="RefSeq" id="XP_054173217.1">
    <molecule id="Q8NC06-2"/>
    <property type="nucleotide sequence ID" value="XM_054317242.1"/>
</dbReference>
<dbReference type="RefSeq" id="XP_054173218.1">
    <molecule id="Q8NC06-2"/>
    <property type="nucleotide sequence ID" value="XM_054317243.1"/>
</dbReference>
<dbReference type="RefSeq" id="XP_054173219.1">
    <molecule id="Q8NC06-2"/>
    <property type="nucleotide sequence ID" value="XM_054317244.1"/>
</dbReference>
<dbReference type="RefSeq" id="XP_054173220.1">
    <molecule id="Q8NC06-2"/>
    <property type="nucleotide sequence ID" value="XM_054317245.1"/>
</dbReference>
<dbReference type="RefSeq" id="XP_054173221.1">
    <molecule id="Q8NC06-2"/>
    <property type="nucleotide sequence ID" value="XM_054317246.1"/>
</dbReference>
<dbReference type="RefSeq" id="XP_054173222.1">
    <molecule id="Q8NC06-2"/>
    <property type="nucleotide sequence ID" value="XM_054317247.1"/>
</dbReference>
<dbReference type="PDB" id="2WH5">
    <property type="method" value="X-ray"/>
    <property type="resolution" value="2.60 A"/>
    <property type="chains" value="A/B/C/D/E/F=7-110"/>
</dbReference>
<dbReference type="PDBsum" id="2WH5"/>
<dbReference type="SMR" id="Q8NC06"/>
<dbReference type="BioGRID" id="122878">
    <property type="interactions" value="14"/>
</dbReference>
<dbReference type="FunCoup" id="Q8NC06">
    <property type="interactions" value="481"/>
</dbReference>
<dbReference type="IntAct" id="Q8NC06">
    <property type="interactions" value="12"/>
</dbReference>
<dbReference type="STRING" id="9606.ENSP00000405969"/>
<dbReference type="iPTMnet" id="Q8NC06"/>
<dbReference type="PhosphoSitePlus" id="Q8NC06"/>
<dbReference type="BioMuta" id="ACBD4"/>
<dbReference type="DMDM" id="67460567"/>
<dbReference type="jPOST" id="Q8NC06"/>
<dbReference type="MassIVE" id="Q8NC06"/>
<dbReference type="PeptideAtlas" id="Q8NC06"/>
<dbReference type="ProteomicsDB" id="72841">
    <molecule id="Q8NC06-1"/>
</dbReference>
<dbReference type="ProteomicsDB" id="72842">
    <molecule id="Q8NC06-2"/>
</dbReference>
<dbReference type="ProteomicsDB" id="72843">
    <molecule id="Q8NC06-3"/>
</dbReference>
<dbReference type="Antibodypedia" id="29971">
    <property type="antibodies" value="144 antibodies from 28 providers"/>
</dbReference>
<dbReference type="DNASU" id="79777"/>
<dbReference type="Ensembl" id="ENST00000321854.13">
    <molecule id="Q8NC06-2"/>
    <property type="protein sequence ID" value="ENSP00000314440.8"/>
    <property type="gene ID" value="ENSG00000181513.15"/>
</dbReference>
<dbReference type="Ensembl" id="ENST00000376955.8">
    <molecule id="Q8NC06-1"/>
    <property type="protein sequence ID" value="ENSP00000366154.3"/>
    <property type="gene ID" value="ENSG00000181513.15"/>
</dbReference>
<dbReference type="Ensembl" id="ENST00000398322.7">
    <molecule id="Q8NC06-2"/>
    <property type="protein sequence ID" value="ENSP00000381367.2"/>
    <property type="gene ID" value="ENSG00000181513.15"/>
</dbReference>
<dbReference type="Ensembl" id="ENST00000431281.5">
    <molecule id="Q8NC06-3"/>
    <property type="protein sequence ID" value="ENSP00000405969.1"/>
    <property type="gene ID" value="ENSG00000181513.15"/>
</dbReference>
<dbReference type="Ensembl" id="ENST00000586346.5">
    <molecule id="Q8NC06-3"/>
    <property type="protein sequence ID" value="ENSP00000465484.1"/>
    <property type="gene ID" value="ENSG00000181513.15"/>
</dbReference>
<dbReference type="Ensembl" id="ENST00000591859.5">
    <molecule id="Q8NC06-3"/>
    <property type="protein sequence ID" value="ENSP00000465610.1"/>
    <property type="gene ID" value="ENSG00000181513.15"/>
</dbReference>
<dbReference type="Ensembl" id="ENST00000619916.4">
    <molecule id="Q8NC06-1"/>
    <property type="protein sequence ID" value="ENSP00000482750.1"/>
    <property type="gene ID" value="ENSG00000181513.15"/>
</dbReference>
<dbReference type="GeneID" id="79777"/>
<dbReference type="KEGG" id="hsa:79777"/>
<dbReference type="MANE-Select" id="ENST00000321854.13">
    <molecule id="Q8NC06-2"/>
    <property type="protein sequence ID" value="ENSP00000314440.8"/>
    <property type="RefSeq nucleotide sequence ID" value="NM_001135705.3"/>
    <property type="RefSeq protein sequence ID" value="NP_001129177.1"/>
</dbReference>
<dbReference type="UCSC" id="uc002iic.4">
    <molecule id="Q8NC06-1"/>
    <property type="organism name" value="human"/>
</dbReference>
<dbReference type="AGR" id="HGNC:23337"/>
<dbReference type="CTD" id="79777"/>
<dbReference type="DisGeNET" id="79777"/>
<dbReference type="GeneCards" id="ACBD4"/>
<dbReference type="HGNC" id="HGNC:23337">
    <property type="gene designation" value="ACBD4"/>
</dbReference>
<dbReference type="HPA" id="ENSG00000181513">
    <property type="expression patterns" value="Tissue enhanced (liver)"/>
</dbReference>
<dbReference type="MIM" id="619968">
    <property type="type" value="gene"/>
</dbReference>
<dbReference type="neXtProt" id="NX_Q8NC06"/>
<dbReference type="OpenTargets" id="ENSG00000181513"/>
<dbReference type="PharmGKB" id="PA134897893"/>
<dbReference type="VEuPathDB" id="HostDB:ENSG00000181513"/>
<dbReference type="GeneTree" id="ENSGT00940000160739"/>
<dbReference type="HOGENOM" id="CLU_034436_1_0_1"/>
<dbReference type="InParanoid" id="Q8NC06"/>
<dbReference type="OMA" id="NIPPEHG"/>
<dbReference type="OrthoDB" id="71307at2759"/>
<dbReference type="PAN-GO" id="Q8NC06">
    <property type="GO annotations" value="3 GO annotations based on evolutionary models"/>
</dbReference>
<dbReference type="PhylomeDB" id="Q8NC06"/>
<dbReference type="TreeFam" id="TF319446"/>
<dbReference type="PathwayCommons" id="Q8NC06"/>
<dbReference type="Reactome" id="R-HSA-390918">
    <property type="pathway name" value="Peroxisomal lipid metabolism"/>
</dbReference>
<dbReference type="SignaLink" id="Q8NC06"/>
<dbReference type="BioGRID-ORCS" id="79777">
    <property type="hits" value="26 hits in 1160 CRISPR screens"/>
</dbReference>
<dbReference type="ChiTaRS" id="ACBD4">
    <property type="organism name" value="human"/>
</dbReference>
<dbReference type="EvolutionaryTrace" id="Q8NC06"/>
<dbReference type="GenomeRNAi" id="79777"/>
<dbReference type="Pharos" id="Q8NC06">
    <property type="development level" value="Tdark"/>
</dbReference>
<dbReference type="PRO" id="PR:Q8NC06"/>
<dbReference type="Proteomes" id="UP000005640">
    <property type="component" value="Chromosome 17"/>
</dbReference>
<dbReference type="RNAct" id="Q8NC06">
    <property type="molecule type" value="protein"/>
</dbReference>
<dbReference type="Bgee" id="ENSG00000181513">
    <property type="expression patterns" value="Expressed in right lobe of liver and 128 other cell types or tissues"/>
</dbReference>
<dbReference type="ExpressionAtlas" id="Q8NC06">
    <property type="expression patterns" value="baseline and differential"/>
</dbReference>
<dbReference type="GO" id="GO:0005737">
    <property type="term" value="C:cytoplasm"/>
    <property type="evidence" value="ECO:0000318"/>
    <property type="project" value="GO_Central"/>
</dbReference>
<dbReference type="GO" id="GO:0000062">
    <property type="term" value="F:fatty-acyl-CoA binding"/>
    <property type="evidence" value="ECO:0000318"/>
    <property type="project" value="GO_Central"/>
</dbReference>
<dbReference type="GO" id="GO:0006631">
    <property type="term" value="P:fatty acid metabolic process"/>
    <property type="evidence" value="ECO:0000318"/>
    <property type="project" value="GO_Central"/>
</dbReference>
<dbReference type="CDD" id="cd00435">
    <property type="entry name" value="ACBP"/>
    <property type="match status" value="1"/>
</dbReference>
<dbReference type="FunFam" id="1.20.80.10:FF:000010">
    <property type="entry name" value="Acyl-CoA-binding domain-containing protein 5"/>
    <property type="match status" value="1"/>
</dbReference>
<dbReference type="Gene3D" id="1.20.80.10">
    <property type="match status" value="1"/>
</dbReference>
<dbReference type="InterPro" id="IPR022408">
    <property type="entry name" value="Acyl-CoA-binding_prot_CS"/>
</dbReference>
<dbReference type="InterPro" id="IPR000582">
    <property type="entry name" value="Acyl-CoA-binding_protein"/>
</dbReference>
<dbReference type="InterPro" id="IPR035984">
    <property type="entry name" value="Acyl-CoA-binding_sf"/>
</dbReference>
<dbReference type="InterPro" id="IPR014352">
    <property type="entry name" value="FERM/acyl-CoA-bd_prot_sf"/>
</dbReference>
<dbReference type="PANTHER" id="PTHR23310:SF53">
    <property type="entry name" value="ACYL-COA-BINDING DOMAIN-CONTAINING PROTEIN 4"/>
    <property type="match status" value="1"/>
</dbReference>
<dbReference type="PANTHER" id="PTHR23310">
    <property type="entry name" value="ACYL-COA-BINDING PROTEIN, ACBP"/>
    <property type="match status" value="1"/>
</dbReference>
<dbReference type="Pfam" id="PF00887">
    <property type="entry name" value="ACBP"/>
    <property type="match status" value="1"/>
</dbReference>
<dbReference type="PRINTS" id="PR00689">
    <property type="entry name" value="ACOABINDINGP"/>
</dbReference>
<dbReference type="SUPFAM" id="SSF47027">
    <property type="entry name" value="Acyl-CoA binding protein"/>
    <property type="match status" value="1"/>
</dbReference>
<dbReference type="PROSITE" id="PS00880">
    <property type="entry name" value="ACB_1"/>
    <property type="match status" value="1"/>
</dbReference>
<dbReference type="PROSITE" id="PS51228">
    <property type="entry name" value="ACB_2"/>
    <property type="match status" value="1"/>
</dbReference>
<organism>
    <name type="scientific">Homo sapiens</name>
    <name type="common">Human</name>
    <dbReference type="NCBI Taxonomy" id="9606"/>
    <lineage>
        <taxon>Eukaryota</taxon>
        <taxon>Metazoa</taxon>
        <taxon>Chordata</taxon>
        <taxon>Craniata</taxon>
        <taxon>Vertebrata</taxon>
        <taxon>Euteleostomi</taxon>
        <taxon>Mammalia</taxon>
        <taxon>Eutheria</taxon>
        <taxon>Euarchontoglires</taxon>
        <taxon>Primates</taxon>
        <taxon>Haplorrhini</taxon>
        <taxon>Catarrhini</taxon>
        <taxon>Hominidae</taxon>
        <taxon>Homo</taxon>
    </lineage>
</organism>
<accession>Q8NC06</accession>
<accession>D3DX64</accession>
<accession>Q8IUT1</accession>
<accession>Q9H8Q4</accession>